<proteinExistence type="inferred from homology"/>
<gene>
    <name type="primary">trpG2</name>
    <name type="ordered locus">pNG7325</name>
</gene>
<comment type="catalytic activity">
    <reaction>
        <text>chorismate + L-glutamine = anthranilate + pyruvate + L-glutamate + H(+)</text>
        <dbReference type="Rhea" id="RHEA:21732"/>
        <dbReference type="ChEBI" id="CHEBI:15361"/>
        <dbReference type="ChEBI" id="CHEBI:15378"/>
        <dbReference type="ChEBI" id="CHEBI:16567"/>
        <dbReference type="ChEBI" id="CHEBI:29748"/>
        <dbReference type="ChEBI" id="CHEBI:29985"/>
        <dbReference type="ChEBI" id="CHEBI:58359"/>
        <dbReference type="EC" id="4.1.3.27"/>
    </reaction>
</comment>
<comment type="pathway">
    <text>Amino-acid biosynthesis; L-tryptophan biosynthesis; L-tryptophan from chorismate: step 1/5.</text>
</comment>
<comment type="subunit">
    <text evidence="1">Tetramer of two components I and two components II.</text>
</comment>
<comment type="miscellaneous">
    <text>Component I catalyzes the formation of anthranilate using ammonia rather than glutamine, whereas component II provides glutamine amidotransferase activity.</text>
</comment>
<evidence type="ECO:0000250" key="1"/>
<evidence type="ECO:0000250" key="2">
    <source>
        <dbReference type="UniProtKB" id="P00900"/>
    </source>
</evidence>
<evidence type="ECO:0000255" key="3">
    <source>
        <dbReference type="PROSITE-ProRule" id="PRU00605"/>
    </source>
</evidence>
<feature type="chain" id="PRO_0000056881" description="Anthranilate synthase component II">
    <location>
        <begin position="1"/>
        <end position="190"/>
    </location>
</feature>
<feature type="domain" description="Glutamine amidotransferase type-1" evidence="3">
    <location>
        <begin position="1"/>
        <end position="190"/>
    </location>
</feature>
<feature type="active site" description="Nucleophile; for GATase activity" evidence="2">
    <location>
        <position position="76"/>
    </location>
</feature>
<feature type="active site" evidence="3">
    <location>
        <position position="167"/>
    </location>
</feature>
<feature type="active site" evidence="3">
    <location>
        <position position="169"/>
    </location>
</feature>
<feature type="binding site" evidence="2">
    <location>
        <begin position="51"/>
        <end position="53"/>
    </location>
    <ligand>
        <name>L-glutamine</name>
        <dbReference type="ChEBI" id="CHEBI:58359"/>
    </ligand>
</feature>
<feature type="binding site" evidence="2">
    <location>
        <position position="80"/>
    </location>
    <ligand>
        <name>L-glutamine</name>
        <dbReference type="ChEBI" id="CHEBI:58359"/>
    </ligand>
</feature>
<feature type="binding site" evidence="2">
    <location>
        <begin position="126"/>
        <end position="127"/>
    </location>
    <ligand>
        <name>L-glutamine</name>
        <dbReference type="ChEBI" id="CHEBI:58359"/>
    </ligand>
</feature>
<organism>
    <name type="scientific">Haloarcula marismortui (strain ATCC 43049 / DSM 3752 / JCM 8966 / VKM B-1809)</name>
    <name type="common">Halobacterium marismortui</name>
    <dbReference type="NCBI Taxonomy" id="272569"/>
    <lineage>
        <taxon>Archaea</taxon>
        <taxon>Methanobacteriati</taxon>
        <taxon>Methanobacteriota</taxon>
        <taxon>Stenosarchaea group</taxon>
        <taxon>Halobacteria</taxon>
        <taxon>Halobacteriales</taxon>
        <taxon>Haloarculaceae</taxon>
        <taxon>Haloarcula</taxon>
    </lineage>
</organism>
<sequence length="190" mass="20308">MILIIDNYDSFAYNLVQYVGEFDDVTVRRNDAIDVEGIHELDPDGIVVSPGPGTPAEAGVSIDVFAETEYPALGVCLGHQALCAAHGTPVGHAPSVVHGKPSEVRHDGTRLYDGVDDPFEVGRYHSLAVKASELPDTLSETAHTNDEQGIVMGVQHAEKPHIGVQFHPESILTDAGKQIVENFCTGIAKA</sequence>
<accession>Q5V632</accession>
<name>TRPG2_HALMA</name>
<reference key="1">
    <citation type="journal article" date="2004" name="Genome Res.">
        <title>Genome sequence of Haloarcula marismortui: a halophilic archaeon from the Dead Sea.</title>
        <authorList>
            <person name="Baliga N.S."/>
            <person name="Bonneau R."/>
            <person name="Facciotti M.T."/>
            <person name="Pan M."/>
            <person name="Glusman G."/>
            <person name="Deutsch E.W."/>
            <person name="Shannon P."/>
            <person name="Chiu Y."/>
            <person name="Weng R.S."/>
            <person name="Gan R.R."/>
            <person name="Hung P."/>
            <person name="Date S.V."/>
            <person name="Marcotte E."/>
            <person name="Hood L."/>
            <person name="Ng W.V."/>
        </authorList>
    </citation>
    <scope>NUCLEOTIDE SEQUENCE [LARGE SCALE GENOMIC DNA]</scope>
    <source>
        <strain>ATCC 43049 / DSM 3752 / JCM 8966 / VKM B-1809</strain>
    </source>
</reference>
<keyword id="KW-0028">Amino-acid biosynthesis</keyword>
<keyword id="KW-0057">Aromatic amino acid biosynthesis</keyword>
<keyword id="KW-0315">Glutamine amidotransferase</keyword>
<keyword id="KW-0456">Lyase</keyword>
<keyword id="KW-0614">Plasmid</keyword>
<keyword id="KW-1185">Reference proteome</keyword>
<keyword id="KW-0822">Tryptophan biosynthesis</keyword>
<geneLocation type="plasmid">
    <name>pNG700</name>
</geneLocation>
<dbReference type="EC" id="4.1.3.27"/>
<dbReference type="EMBL" id="AY596296">
    <property type="protein sequence ID" value="AAV45020.1"/>
    <property type="molecule type" value="Genomic_DNA"/>
</dbReference>
<dbReference type="RefSeq" id="WP_007190565.1">
    <property type="nucleotide sequence ID" value="NZ_CP039137.1"/>
</dbReference>
<dbReference type="SMR" id="Q5V632"/>
<dbReference type="EnsemblBacteria" id="AAV45020">
    <property type="protein sequence ID" value="AAV45020"/>
    <property type="gene ID" value="pNG7325"/>
</dbReference>
<dbReference type="KEGG" id="hma:pNG7325"/>
<dbReference type="PATRIC" id="fig|272569.17.peg.752"/>
<dbReference type="HOGENOM" id="CLU_014340_1_2_2"/>
<dbReference type="UniPathway" id="UPA00035">
    <property type="reaction ID" value="UER00040"/>
</dbReference>
<dbReference type="Proteomes" id="UP000001169">
    <property type="component" value="Plasmid pNG700"/>
</dbReference>
<dbReference type="GO" id="GO:0005829">
    <property type="term" value="C:cytosol"/>
    <property type="evidence" value="ECO:0007669"/>
    <property type="project" value="TreeGrafter"/>
</dbReference>
<dbReference type="GO" id="GO:0004049">
    <property type="term" value="F:anthranilate synthase activity"/>
    <property type="evidence" value="ECO:0007669"/>
    <property type="project" value="UniProtKB-EC"/>
</dbReference>
<dbReference type="GO" id="GO:0000162">
    <property type="term" value="P:L-tryptophan biosynthetic process"/>
    <property type="evidence" value="ECO:0007669"/>
    <property type="project" value="UniProtKB-UniPathway"/>
</dbReference>
<dbReference type="CDD" id="cd01743">
    <property type="entry name" value="GATase1_Anthranilate_Synthase"/>
    <property type="match status" value="1"/>
</dbReference>
<dbReference type="FunFam" id="3.40.50.880:FF:000003">
    <property type="entry name" value="Anthranilate synthase component II"/>
    <property type="match status" value="1"/>
</dbReference>
<dbReference type="Gene3D" id="3.40.50.880">
    <property type="match status" value="1"/>
</dbReference>
<dbReference type="InterPro" id="IPR050472">
    <property type="entry name" value="Anth_synth/Amidotransfase"/>
</dbReference>
<dbReference type="InterPro" id="IPR029062">
    <property type="entry name" value="Class_I_gatase-like"/>
</dbReference>
<dbReference type="InterPro" id="IPR017926">
    <property type="entry name" value="GATASE"/>
</dbReference>
<dbReference type="InterPro" id="IPR006221">
    <property type="entry name" value="TrpG/PapA_dom"/>
</dbReference>
<dbReference type="NCBIfam" id="TIGR00566">
    <property type="entry name" value="trpG_papA"/>
    <property type="match status" value="1"/>
</dbReference>
<dbReference type="PANTHER" id="PTHR43418:SF4">
    <property type="entry name" value="MULTIFUNCTIONAL TRYPTOPHAN BIOSYNTHESIS PROTEIN"/>
    <property type="match status" value="1"/>
</dbReference>
<dbReference type="PANTHER" id="PTHR43418">
    <property type="entry name" value="MULTIFUNCTIONAL TRYPTOPHAN BIOSYNTHESIS PROTEIN-RELATED"/>
    <property type="match status" value="1"/>
</dbReference>
<dbReference type="Pfam" id="PF00117">
    <property type="entry name" value="GATase"/>
    <property type="match status" value="1"/>
</dbReference>
<dbReference type="PRINTS" id="PR00097">
    <property type="entry name" value="ANTSNTHASEII"/>
</dbReference>
<dbReference type="PRINTS" id="PR00096">
    <property type="entry name" value="GATASE"/>
</dbReference>
<dbReference type="SUPFAM" id="SSF52317">
    <property type="entry name" value="Class I glutamine amidotransferase-like"/>
    <property type="match status" value="1"/>
</dbReference>
<dbReference type="PROSITE" id="PS51273">
    <property type="entry name" value="GATASE_TYPE_1"/>
    <property type="match status" value="1"/>
</dbReference>
<protein>
    <recommendedName>
        <fullName>Anthranilate synthase component II</fullName>
        <ecNumber>4.1.3.27</ecNumber>
    </recommendedName>
</protein>